<proteinExistence type="evidence at protein level"/>
<accession>P0DQW2</accession>
<keyword id="KW-0027">Amidation</keyword>
<keyword id="KW-0878">Amphibian defense peptide</keyword>
<keyword id="KW-0044">Antibiotic</keyword>
<keyword id="KW-0929">Antimicrobial</keyword>
<keyword id="KW-0903">Direct protein sequencing</keyword>
<keyword id="KW-0391">Immunity</keyword>
<keyword id="KW-0399">Innate immunity</keyword>
<keyword id="KW-0472">Membrane</keyword>
<keyword id="KW-0964">Secreted</keyword>
<keyword id="KW-1052">Target cell membrane</keyword>
<keyword id="KW-1053">Target membrane</keyword>
<comment type="function">
    <text evidence="2">Antibacterial peptide with amphipathic alpha-helical structure. Shows selective growth inhibitory activity against the Gram-negative bacteria E.coli (MIC=25 uM) Has a weak hemolytic activity against human erythrocytes (LC(50)&gt;100 uM). Is very weakly active against S.aureus (MIC=200 uM).</text>
</comment>
<comment type="subcellular location">
    <subcellularLocation>
        <location evidence="2">Secreted</location>
    </subcellularLocation>
    <subcellularLocation>
        <location evidence="1">Target cell membrane</location>
    </subcellularLocation>
    <text evidence="1">About the first 18 N-terminal residues of the peptide inserts into the lipid bilayer.</text>
</comment>
<comment type="tissue specificity">
    <text evidence="5">Expressed by the skin glands.</text>
</comment>
<comment type="mass spectrometry" mass="2277.3" method="MALDI" evidence="2"/>
<comment type="similarity">
    <text evidence="4">Belongs to the frog skin active peptide (FSAP) family. Alyteserin-1 subfamily.</text>
</comment>
<protein>
    <recommendedName>
        <fullName evidence="3">Alyteserin-1a</fullName>
    </recommendedName>
</protein>
<sequence length="23" mass="2280">GLKDIFKAGLGSLVKGIAAHVAN</sequence>
<reference key="1">
    <citation type="journal article" date="2009" name="Peptides">
        <title>The alyteserins: two families of antimicrobial peptides from the skin secretions of the midwife toad Alytes obstetricans (Alytidae).</title>
        <authorList>
            <person name="Conlon J.M."/>
            <person name="Demandt A."/>
            <person name="Nielsen P.F."/>
            <person name="Leprince J."/>
            <person name="Vaudry H."/>
            <person name="Woodhams D.C."/>
        </authorList>
    </citation>
    <scope>PROTEIN SEQUENCE</scope>
    <scope>FUNCTION</scope>
    <scope>SUBCELLULAR LOCATION</scope>
    <scope>AMIDATION AT ASN-23</scope>
    <scope>MASS SPECTROMETRY</scope>
    <source>
        <tissue>Skin secretion</tissue>
    </source>
</reference>
<feature type="peptide" id="PRO_0000457130" description="Alyteserin-1a" evidence="2">
    <location>
        <begin position="1"/>
        <end position="23"/>
    </location>
</feature>
<feature type="modified residue" description="Asparagine amide" evidence="2">
    <location>
        <position position="23"/>
    </location>
</feature>
<evidence type="ECO:0000250" key="1">
    <source>
        <dbReference type="UniProtKB" id="H0USY4"/>
    </source>
</evidence>
<evidence type="ECO:0000269" key="2">
    <source>
    </source>
</evidence>
<evidence type="ECO:0000303" key="3">
    <source>
    </source>
</evidence>
<evidence type="ECO:0000305" key="4"/>
<evidence type="ECO:0000305" key="5">
    <source>
    </source>
</evidence>
<dbReference type="GO" id="GO:0005576">
    <property type="term" value="C:extracellular region"/>
    <property type="evidence" value="ECO:0007669"/>
    <property type="project" value="UniProtKB-SubCell"/>
</dbReference>
<dbReference type="GO" id="GO:0016020">
    <property type="term" value="C:membrane"/>
    <property type="evidence" value="ECO:0007669"/>
    <property type="project" value="UniProtKB-KW"/>
</dbReference>
<dbReference type="GO" id="GO:0044218">
    <property type="term" value="C:other organism cell membrane"/>
    <property type="evidence" value="ECO:0007669"/>
    <property type="project" value="UniProtKB-KW"/>
</dbReference>
<dbReference type="GO" id="GO:0042742">
    <property type="term" value="P:defense response to bacterium"/>
    <property type="evidence" value="ECO:0007669"/>
    <property type="project" value="UniProtKB-KW"/>
</dbReference>
<dbReference type="GO" id="GO:0045087">
    <property type="term" value="P:innate immune response"/>
    <property type="evidence" value="ECO:0007669"/>
    <property type="project" value="UniProtKB-KW"/>
</dbReference>
<name>ATI1A_ALYOB</name>
<organism>
    <name type="scientific">Alytes obstetricans</name>
    <name type="common">Common midwife toad</name>
    <name type="synonym">Bufo obstetricans</name>
    <dbReference type="NCBI Taxonomy" id="8443"/>
    <lineage>
        <taxon>Eukaryota</taxon>
        <taxon>Metazoa</taxon>
        <taxon>Chordata</taxon>
        <taxon>Craniata</taxon>
        <taxon>Vertebrata</taxon>
        <taxon>Euteleostomi</taxon>
        <taxon>Amphibia</taxon>
        <taxon>Batrachia</taxon>
        <taxon>Anura</taxon>
        <taxon>Alytidae</taxon>
        <taxon>Alytinae</taxon>
        <taxon>Alytes</taxon>
    </lineage>
</organism>